<feature type="chain" id="PRO_0000391018" description="UPF0761 membrane protein Mlg_0521">
    <location>
        <begin position="1"/>
        <end position="445"/>
    </location>
</feature>
<feature type="transmembrane region" description="Helical" evidence="1">
    <location>
        <begin position="56"/>
        <end position="76"/>
    </location>
</feature>
<feature type="transmembrane region" description="Helical" evidence="1">
    <location>
        <begin position="112"/>
        <end position="132"/>
    </location>
</feature>
<feature type="transmembrane region" description="Helical" evidence="1">
    <location>
        <begin position="152"/>
        <end position="172"/>
    </location>
</feature>
<feature type="transmembrane region" description="Helical" evidence="1">
    <location>
        <begin position="195"/>
        <end position="215"/>
    </location>
</feature>
<feature type="transmembrane region" description="Helical" evidence="1">
    <location>
        <begin position="225"/>
        <end position="245"/>
    </location>
</feature>
<feature type="transmembrane region" description="Helical" evidence="1">
    <location>
        <begin position="259"/>
        <end position="279"/>
    </location>
</feature>
<name>Y521_ALKEH</name>
<gene>
    <name type="ordered locus">Mlg_0521</name>
</gene>
<dbReference type="EMBL" id="CP000453">
    <property type="protein sequence ID" value="ABI55875.1"/>
    <property type="molecule type" value="Genomic_DNA"/>
</dbReference>
<dbReference type="RefSeq" id="WP_011628270.1">
    <property type="nucleotide sequence ID" value="NC_008340.1"/>
</dbReference>
<dbReference type="SMR" id="Q0ABB2"/>
<dbReference type="KEGG" id="aeh:Mlg_0521"/>
<dbReference type="eggNOG" id="COG1295">
    <property type="taxonomic scope" value="Bacteria"/>
</dbReference>
<dbReference type="eggNOG" id="COG1959">
    <property type="taxonomic scope" value="Bacteria"/>
</dbReference>
<dbReference type="HOGENOM" id="CLU_032288_1_0_6"/>
<dbReference type="OrthoDB" id="9808671at2"/>
<dbReference type="Proteomes" id="UP000001962">
    <property type="component" value="Chromosome"/>
</dbReference>
<dbReference type="GO" id="GO:0005886">
    <property type="term" value="C:plasma membrane"/>
    <property type="evidence" value="ECO:0007669"/>
    <property type="project" value="UniProtKB-SubCell"/>
</dbReference>
<dbReference type="HAMAP" id="MF_00672">
    <property type="entry name" value="UPF0761"/>
    <property type="match status" value="1"/>
</dbReference>
<dbReference type="InterPro" id="IPR023679">
    <property type="entry name" value="UPF0761_bac"/>
</dbReference>
<dbReference type="InterPro" id="IPR017039">
    <property type="entry name" value="Virul_fac_BrkB"/>
</dbReference>
<dbReference type="NCBIfam" id="NF002457">
    <property type="entry name" value="PRK01637.1"/>
    <property type="match status" value="1"/>
</dbReference>
<dbReference type="NCBIfam" id="TIGR00765">
    <property type="entry name" value="yihY_not_rbn"/>
    <property type="match status" value="1"/>
</dbReference>
<dbReference type="PANTHER" id="PTHR30213">
    <property type="entry name" value="INNER MEMBRANE PROTEIN YHJD"/>
    <property type="match status" value="1"/>
</dbReference>
<dbReference type="PANTHER" id="PTHR30213:SF0">
    <property type="entry name" value="UPF0761 MEMBRANE PROTEIN YIHY"/>
    <property type="match status" value="1"/>
</dbReference>
<dbReference type="Pfam" id="PF03631">
    <property type="entry name" value="Virul_fac_BrkB"/>
    <property type="match status" value="1"/>
</dbReference>
<evidence type="ECO:0000255" key="1">
    <source>
        <dbReference type="HAMAP-Rule" id="MF_00672"/>
    </source>
</evidence>
<protein>
    <recommendedName>
        <fullName evidence="1">UPF0761 membrane protein Mlg_0521</fullName>
    </recommendedName>
</protein>
<organism>
    <name type="scientific">Alkalilimnicola ehrlichii (strain ATCC BAA-1101 / DSM 17681 / MLHE-1)</name>
    <dbReference type="NCBI Taxonomy" id="187272"/>
    <lineage>
        <taxon>Bacteria</taxon>
        <taxon>Pseudomonadati</taxon>
        <taxon>Pseudomonadota</taxon>
        <taxon>Gammaproteobacteria</taxon>
        <taxon>Chromatiales</taxon>
        <taxon>Ectothiorhodospiraceae</taxon>
        <taxon>Alkalilimnicola</taxon>
    </lineage>
</organism>
<accession>Q0ABB2</accession>
<proteinExistence type="inferred from homology"/>
<sequence>MANPVGAIRQRCAAIGEQLQGVDWLRVAVDFPLYVAERFRRDACLQNAATLSYTTLLALVPLLTIGLSIFAAFPVFSGLTEQMLDLLFENLVPASTAVVQQHLEDFVGRAAGLTVVGLLALMVSALLMMAAIDRAMNDIWRVQQRRRPLHGFMVYWTVLTLAPILMGASLGISSYVISVTRFGELEALSGLQGLLLAGMPFVAETVAFTFLYAAVPNFRVPLRHALLGGLLAAALFEAAKGGFGWYVANIPTYEAIYGALAALPIFLIWLYLSWVVVLVGAEFTQALASYSVARHRAAGTGRDAFRLAVRVLGHLWRAQREGRGLSTRALSRLEPAAGEMGVLQVLRPLRRARAIQLNGEGEWMLARDPSHYTLLDLYRSEAFPLPSVAALRKDGDDWDQRLADSLAQADTGLASGLAESLDDIFTSRPQIRPVVRQANSPSEER</sequence>
<comment type="subcellular location">
    <subcellularLocation>
        <location evidence="1">Cell inner membrane</location>
        <topology evidence="1">Multi-pass membrane protein</topology>
    </subcellularLocation>
</comment>
<comment type="similarity">
    <text evidence="1">Belongs to the UPF0761 family.</text>
</comment>
<reference key="1">
    <citation type="submission" date="2006-08" db="EMBL/GenBank/DDBJ databases">
        <title>Complete sequence of Alkalilimnicola ehrilichei MLHE-1.</title>
        <authorList>
            <person name="Copeland A."/>
            <person name="Lucas S."/>
            <person name="Lapidus A."/>
            <person name="Barry K."/>
            <person name="Detter J.C."/>
            <person name="Glavina del Rio T."/>
            <person name="Hammon N."/>
            <person name="Israni S."/>
            <person name="Dalin E."/>
            <person name="Tice H."/>
            <person name="Pitluck S."/>
            <person name="Sims D."/>
            <person name="Brettin T."/>
            <person name="Bruce D."/>
            <person name="Han C."/>
            <person name="Tapia R."/>
            <person name="Gilna P."/>
            <person name="Schmutz J."/>
            <person name="Larimer F."/>
            <person name="Land M."/>
            <person name="Hauser L."/>
            <person name="Kyrpides N."/>
            <person name="Mikhailova N."/>
            <person name="Oremland R.S."/>
            <person name="Hoeft S.E."/>
            <person name="Switzer-Blum J."/>
            <person name="Kulp T."/>
            <person name="King G."/>
            <person name="Tabita R."/>
            <person name="Witte B."/>
            <person name="Santini J.M."/>
            <person name="Basu P."/>
            <person name="Hollibaugh J.T."/>
            <person name="Xie G."/>
            <person name="Stolz J.F."/>
            <person name="Richardson P."/>
        </authorList>
    </citation>
    <scope>NUCLEOTIDE SEQUENCE [LARGE SCALE GENOMIC DNA]</scope>
    <source>
        <strain>ATCC BAA-1101 / DSM 17681 / MLHE-1</strain>
    </source>
</reference>
<keyword id="KW-0997">Cell inner membrane</keyword>
<keyword id="KW-1003">Cell membrane</keyword>
<keyword id="KW-0472">Membrane</keyword>
<keyword id="KW-1185">Reference proteome</keyword>
<keyword id="KW-0812">Transmembrane</keyword>
<keyword id="KW-1133">Transmembrane helix</keyword>